<evidence type="ECO:0000250" key="1">
    <source>
        <dbReference type="UniProtKB" id="Q6NX65"/>
    </source>
</evidence>
<evidence type="ECO:0000250" key="2">
    <source>
        <dbReference type="UniProtKB" id="Q8VE70"/>
    </source>
</evidence>
<evidence type="ECO:0000269" key="3">
    <source>
    </source>
</evidence>
<evidence type="ECO:0000269" key="4">
    <source>
    </source>
</evidence>
<evidence type="ECO:0000269" key="5">
    <source>
    </source>
</evidence>
<evidence type="ECO:0000269" key="6">
    <source>
    </source>
</evidence>
<evidence type="ECO:0000269" key="7">
    <source>
    </source>
</evidence>
<evidence type="ECO:0000269" key="8">
    <source>
    </source>
</evidence>
<evidence type="ECO:0000269" key="9">
    <source>
    </source>
</evidence>
<evidence type="ECO:0000269" key="10">
    <source ref="1"/>
</evidence>
<evidence type="ECO:0000269" key="11">
    <source ref="5"/>
</evidence>
<evidence type="ECO:0000303" key="12">
    <source>
    </source>
</evidence>
<evidence type="ECO:0000305" key="13"/>
<evidence type="ECO:0000305" key="14">
    <source>
    </source>
</evidence>
<evidence type="ECO:0000312" key="15">
    <source>
        <dbReference type="HGNC" id="HGNC:8761"/>
    </source>
</evidence>
<evidence type="ECO:0007744" key="16">
    <source>
    </source>
</evidence>
<evidence type="ECO:0007744" key="17">
    <source>
    </source>
</evidence>
<evidence type="ECO:0007829" key="18">
    <source>
        <dbReference type="PDB" id="3L8I"/>
    </source>
</evidence>
<evidence type="ECO:0007829" key="19">
    <source>
        <dbReference type="PDB" id="4GEH"/>
    </source>
</evidence>
<evidence type="ECO:0007829" key="20">
    <source>
        <dbReference type="PDB" id="4TVQ"/>
    </source>
</evidence>
<feature type="chain" id="PRO_0000187562" description="Programmed cell death protein 10">
    <location>
        <begin position="1"/>
        <end position="212"/>
    </location>
</feature>
<feature type="modified residue" description="N6-acetyllysine" evidence="16">
    <location>
        <position position="179"/>
    </location>
</feature>
<feature type="cross-link" description="Glycyl lysine isopeptide (Lys-Gly) (interchain with G-Cter in SUMO2)" evidence="17">
    <location>
        <position position="186"/>
    </location>
</feature>
<feature type="sequence variant" id="VAR_023578" description="In dbSNP:rs1129087." evidence="10">
    <original>D</original>
    <variation>A</variation>
    <location>
        <position position="102"/>
    </location>
</feature>
<feature type="mutagenesis site" description="Loss of interaction with CCM2 and PXN; when associated with D-139; D-172 and D-179." evidence="7">
    <original>K</original>
    <variation>D</variation>
    <location>
        <position position="132"/>
    </location>
</feature>
<feature type="mutagenesis site" description="Loss of interaction with CCM2." evidence="7">
    <original>A</original>
    <variation>D</variation>
    <location>
        <position position="135"/>
    </location>
</feature>
<feature type="mutagenesis site" description="Loss of interaction with CCM2 and PXN; when associated with D-132; D-172 and D-179." evidence="7">
    <original>K</original>
    <variation>D</variation>
    <location>
        <position position="139"/>
    </location>
</feature>
<feature type="mutagenesis site" description="Loss of interaction with CCM2 and PXN; when associated with D-132; D-139 and D-179." evidence="7">
    <original>K</original>
    <variation>D</variation>
    <location>
        <position position="172"/>
    </location>
</feature>
<feature type="mutagenesis site" description="Loss of interaction with CCM2." evidence="7">
    <original>S</original>
    <variation>D</variation>
    <location>
        <position position="175"/>
    </location>
</feature>
<feature type="mutagenesis site" description="Loss of interaction with CCM2 and PXN; when associated with D-132; D-139 and D-172." evidence="7">
    <original>K</original>
    <variation>D</variation>
    <location>
        <position position="179"/>
    </location>
</feature>
<feature type="helix" evidence="18">
    <location>
        <begin position="5"/>
        <end position="9"/>
    </location>
</feature>
<feature type="helix" evidence="18">
    <location>
        <begin position="11"/>
        <end position="14"/>
    </location>
</feature>
<feature type="helix" evidence="19">
    <location>
        <begin position="17"/>
        <end position="19"/>
    </location>
</feature>
<feature type="helix" evidence="19">
    <location>
        <begin position="20"/>
        <end position="24"/>
    </location>
</feature>
<feature type="helix" evidence="19">
    <location>
        <begin position="26"/>
        <end position="34"/>
    </location>
</feature>
<feature type="helix" evidence="19">
    <location>
        <begin position="38"/>
        <end position="54"/>
    </location>
</feature>
<feature type="helix" evidence="19">
    <location>
        <begin position="58"/>
        <end position="69"/>
    </location>
</feature>
<feature type="helix" evidence="19">
    <location>
        <begin position="76"/>
        <end position="82"/>
    </location>
</feature>
<feature type="turn" evidence="19">
    <location>
        <begin position="83"/>
        <end position="85"/>
    </location>
</feature>
<feature type="helix" evidence="19">
    <location>
        <begin position="88"/>
        <end position="91"/>
    </location>
</feature>
<feature type="helix" evidence="19">
    <location>
        <begin position="98"/>
        <end position="115"/>
    </location>
</feature>
<feature type="helix" evidence="19">
    <location>
        <begin position="117"/>
        <end position="120"/>
    </location>
</feature>
<feature type="strand" evidence="20">
    <location>
        <begin position="121"/>
        <end position="123"/>
    </location>
</feature>
<feature type="helix" evidence="19">
    <location>
        <begin position="124"/>
        <end position="151"/>
    </location>
</feature>
<feature type="turn" evidence="19">
    <location>
        <begin position="152"/>
        <end position="156"/>
    </location>
</feature>
<feature type="helix" evidence="19">
    <location>
        <begin position="157"/>
        <end position="184"/>
    </location>
</feature>
<feature type="helix" evidence="19">
    <location>
        <begin position="187"/>
        <end position="208"/>
    </location>
</feature>
<gene>
    <name evidence="15" type="primary">PDCD10</name>
    <name evidence="12" type="synonym">CCM3</name>
    <name type="synonym">TFAR15</name>
</gene>
<comment type="function">
    <text evidence="2 3 4 5 6 8">Promotes cell proliferation. Modulates apoptotic pathways. Increases mitogen-activated protein kinase activity and STK26 activity (PubMed:27807006). Important for cell migration, and for normal structure and assembly of the Golgi complex (PubMed:27807006). Part of the striatin-interacting phosphatase and kinase (STRIPAK) complexes. STRIPAK complexes have critical roles in protein (de)phosphorylation and are regulators of multiple signaling pathways including Hippo, MAPK, nuclear receptor and cytoskeleton remodeling. Different types of STRIPAK complexes are involved in a variety of biological processes such as cell growth, differentiation, apoptosis, metabolism and immune regulation (PubMed:18782753). Important for KDR/VEGFR2 signaling. Increases the stability of KDR/VEGFR2 and prevents its breakdown. Required for normal cardiovascular development. Required for normal angiogenesis, vasculogenesis and hematopoiesis during embryonic development (By similarity).</text>
</comment>
<comment type="subunit">
    <text evidence="4 5 6 7 8 9 11">Homodimer (PubMed:20489202). Interacts (via C-terminus) with CCM2 (PubMed:17360971, PubMed:20489202). Interacts (via C-terminus) with PXN (PubMed:20489202). Interacts (via N-terminus) with STK25 (PubMed:17360971, PubMed:20332113). Interacts (via N-terminus) with STK26 (PubMed:17360971, PubMed:20332113, PubMed:27807006). Interacts (via N-terminus) with STK24 (PubMed:20332113, PubMed:27807006). Interacts with GOLGA2 (PubMed:20332113). Identified in a complex with KRIT1 and CCM2. Interacts with KDR/VEGFR2. Interaction with KDR/VEGFR2 is enhanced by stimulation with VEGFA (Ref.5). Interacts with RIPOR1 (via C-terminus); this interaction is required for the association of RIPOR1 with either STK24 and STK26 kinases and occurs in a Rho-independent manner (PubMed:27807006). Part of the core of STRIPAK complexes composed of PP2A catalytic and scaffolding subunits, the striatins (PP2A regulatory subunits), the striatin-associated proteins MOB4, STRIP1 and STRIP2, PDCD10 and members of the STE20 kinases, such as STK24 and STK26 (PubMed:18782753). Found in complex with PGCKA1 and members of the STE20 kinases, such as STK24, STK25 and STK26 (PubMed:38517886).</text>
</comment>
<comment type="interaction">
    <interactant intactId="EBI-740195">
        <id>Q9BUL8</id>
    </interactant>
    <interactant intactId="EBI-10216552">
        <id>Q8IY42</id>
        <label>C4orf19</label>
    </interactant>
    <organismsDiffer>false</organismsDiffer>
    <experiments>10</experiments>
</comment>
<comment type="interaction">
    <interactant intactId="EBI-740195">
        <id>Q9BUL8</id>
    </interactant>
    <interactant intactId="EBI-1573056">
        <id>Q9BSQ5</id>
        <label>CCM2</label>
    </interactant>
    <organismsDiffer>false</organismsDiffer>
    <experiments>5</experiments>
</comment>
<comment type="interaction">
    <interactant intactId="EBI-740195">
        <id>Q9BUL8</id>
    </interactant>
    <interactant intactId="EBI-726822">
        <id>Q9BPY3</id>
        <label>FAM118B</label>
    </interactant>
    <organismsDiffer>false</organismsDiffer>
    <experiments>3</experiments>
</comment>
<comment type="interaction">
    <interactant intactId="EBI-740195">
        <id>Q9BUL8</id>
    </interactant>
    <interactant intactId="EBI-725361">
        <id>Q9Y285</id>
        <label>FARSA</label>
    </interactant>
    <organismsDiffer>false</organismsDiffer>
    <experiments>3</experiments>
</comment>
<comment type="interaction">
    <interactant intactId="EBI-740195">
        <id>Q9BUL8</id>
    </interactant>
    <interactant intactId="EBI-12023420">
        <id>O94915-2</id>
        <label>FRYL</label>
    </interactant>
    <organismsDiffer>false</organismsDiffer>
    <experiments>3</experiments>
</comment>
<comment type="interaction">
    <interactant intactId="EBI-740195">
        <id>Q9BUL8</id>
    </interactant>
    <interactant intactId="EBI-11977115">
        <id>Q9UPX6</id>
        <label>MINAR1</label>
    </interactant>
    <organismsDiffer>false</organismsDiffer>
    <experiments>3</experiments>
</comment>
<comment type="interaction">
    <interactant intactId="EBI-740195">
        <id>Q9BUL8</id>
    </interactant>
    <interactant intactId="EBI-6137569">
        <id>Q499L9</id>
        <label>MST4</label>
    </interactant>
    <organismsDiffer>false</organismsDiffer>
    <experiments>5</experiments>
</comment>
<comment type="interaction">
    <interactant intactId="EBI-740195">
        <id>Q9BUL8</id>
    </interactant>
    <interactant intactId="EBI-26412802">
        <id>Q5SXH7-1</id>
        <label>PLEKHS1</label>
    </interactant>
    <organismsDiffer>false</organismsDiffer>
    <experiments>3</experiments>
</comment>
<comment type="interaction">
    <interactant intactId="EBI-740195">
        <id>Q9BUL8</id>
    </interactant>
    <interactant intactId="EBI-13089670">
        <id>Q86WR7-2</id>
        <label>PROSER2</label>
    </interactant>
    <organismsDiffer>false</organismsDiffer>
    <experiments>3</experiments>
</comment>
<comment type="interaction">
    <interactant intactId="EBI-740195">
        <id>Q9BUL8</id>
    </interactant>
    <interactant intactId="EBI-355227">
        <id>Q12923</id>
        <label>PTPN13</label>
    </interactant>
    <organismsDiffer>false</organismsDiffer>
    <experiments>3</experiments>
</comment>
<comment type="interaction">
    <interactant intactId="EBI-740195">
        <id>Q9BUL8</id>
    </interactant>
    <interactant intactId="EBI-740175">
        <id>Q9Y6E0</id>
        <label>STK24</label>
    </interactant>
    <organismsDiffer>false</organismsDiffer>
    <experiments>14</experiments>
</comment>
<comment type="interaction">
    <interactant intactId="EBI-740195">
        <id>Q9BUL8</id>
    </interactant>
    <interactant intactId="EBI-10299018">
        <id>Q9Y6E0-2</id>
        <label>STK24</label>
    </interactant>
    <organismsDiffer>false</organismsDiffer>
    <experiments>9</experiments>
</comment>
<comment type="interaction">
    <interactant intactId="EBI-740195">
        <id>Q9BUL8</id>
    </interactant>
    <interactant intactId="EBI-618295">
        <id>O00506</id>
        <label>STK25</label>
    </interactant>
    <organismsDiffer>false</organismsDiffer>
    <experiments>33</experiments>
</comment>
<comment type="interaction">
    <interactant intactId="EBI-740195">
        <id>Q9BUL8</id>
    </interactant>
    <interactant intactId="EBI-618239">
        <id>Q9P289</id>
        <label>STK26</label>
    </interactant>
    <organismsDiffer>false</organismsDiffer>
    <experiments>11</experiments>
</comment>
<comment type="interaction">
    <interactant intactId="EBI-740195">
        <id>Q9BUL8</id>
    </interactant>
    <interactant intactId="EBI-15996971">
        <id>Q9P289-1</id>
        <label>STK26</label>
    </interactant>
    <organismsDiffer>false</organismsDiffer>
    <experiments>10</experiments>
</comment>
<comment type="interaction">
    <interactant intactId="EBI-740195">
        <id>Q9BUL8</id>
    </interactant>
    <interactant intactId="EBI-1046642">
        <id>O43815</id>
        <label>STRN</label>
    </interactant>
    <organismsDiffer>false</organismsDiffer>
    <experiments>7</experiments>
</comment>
<comment type="interaction">
    <interactant intactId="EBI-740195">
        <id>Q9BUL8</id>
    </interactant>
    <interactant intactId="EBI-1266294">
        <id>O43815-2</id>
        <label>STRN</label>
    </interactant>
    <organismsDiffer>false</organismsDiffer>
    <experiments>3</experiments>
</comment>
<comment type="interaction">
    <interactant intactId="EBI-740195">
        <id>Q9BUL8</id>
    </interactant>
    <interactant intactId="EBI-10282278">
        <id>Q96BA2</id>
    </interactant>
    <organismsDiffer>false</organismsDiffer>
    <experiments>5</experiments>
</comment>
<comment type="subcellular location">
    <subcellularLocation>
        <location evidence="14">Cytoplasm</location>
    </subcellularLocation>
    <subcellularLocation>
        <location evidence="1">Golgi apparatus membrane</location>
        <topology evidence="1">Peripheral membrane protein</topology>
        <orientation evidence="1">Cytoplasmic side</orientation>
    </subcellularLocation>
    <subcellularLocation>
        <location evidence="1">Cell membrane</location>
        <topology evidence="1">Peripheral membrane protein</topology>
        <orientation evidence="1">Cytoplasmic side</orientation>
    </subcellularLocation>
</comment>
<comment type="tissue specificity">
    <text evidence="3">Ubiquitous.</text>
</comment>
<comment type="disease" evidence="3">
    <disease id="DI-00257">
        <name>Cerebral cavernous malformations 3</name>
        <acronym>CCM3</acronym>
        <description>A form of cerebral cavernous malformations, a congenital vascular anomaly of the central nervous system that can result in hemorrhagic stroke, seizures, recurrent headaches, and focal neurologic deficits. The lesions are characterized by grossly enlarged blood vessels consisting of a single layer of endothelium and without any intervening neural tissue, ranging in diameter from a few millimeters to several centimeters. CCM3 inheritance is autosomal dominant.</description>
        <dbReference type="MIM" id="603285"/>
    </disease>
    <text>The disease is caused by variants affecting the gene represented in this entry.</text>
</comment>
<comment type="similarity">
    <text evidence="13">Belongs to the PDCD10 family.</text>
</comment>
<protein>
    <recommendedName>
        <fullName>Programmed cell death protein 10</fullName>
    </recommendedName>
    <alternativeName>
        <fullName>Cerebral cavernous malformations 3 protein</fullName>
    </alternativeName>
    <alternativeName>
        <fullName>TF-1 cell apoptosis-related protein 15</fullName>
    </alternativeName>
</protein>
<proteinExistence type="evidence at protein level"/>
<accession>Q9BUL8</accession>
<accession>A8K515</accession>
<accession>D3DNN5</accession>
<accession>O14811</accession>
<keyword id="KW-0002">3D-structure</keyword>
<keyword id="KW-0007">Acetylation</keyword>
<keyword id="KW-0037">Angiogenesis</keyword>
<keyword id="KW-0053">Apoptosis</keyword>
<keyword id="KW-1003">Cell membrane</keyword>
<keyword id="KW-0963">Cytoplasm</keyword>
<keyword id="KW-0903">Direct protein sequencing</keyword>
<keyword id="KW-0333">Golgi apparatus</keyword>
<keyword id="KW-1017">Isopeptide bond</keyword>
<keyword id="KW-0472">Membrane</keyword>
<keyword id="KW-1267">Proteomics identification</keyword>
<keyword id="KW-1185">Reference proteome</keyword>
<keyword id="KW-0832">Ubl conjugation</keyword>
<organism>
    <name type="scientific">Homo sapiens</name>
    <name type="common">Human</name>
    <dbReference type="NCBI Taxonomy" id="9606"/>
    <lineage>
        <taxon>Eukaryota</taxon>
        <taxon>Metazoa</taxon>
        <taxon>Chordata</taxon>
        <taxon>Craniata</taxon>
        <taxon>Vertebrata</taxon>
        <taxon>Euteleostomi</taxon>
        <taxon>Mammalia</taxon>
        <taxon>Eutheria</taxon>
        <taxon>Euarchontoglires</taxon>
        <taxon>Primates</taxon>
        <taxon>Haplorrhini</taxon>
        <taxon>Catarrhini</taxon>
        <taxon>Hominidae</taxon>
        <taxon>Homo</taxon>
    </lineage>
</organism>
<name>PDC10_HUMAN</name>
<reference key="1">
    <citation type="journal article" date="1999" name="Sci. China, Ser. C, Life Sci.">
        <title>cDNA cloning and expression of an apoptosis-related gene, human TFAR-15 gene.</title>
        <authorList>
            <person name="Wang Y.G."/>
            <person name="Liu H.T."/>
            <person name="Ma D.L."/>
            <person name="Zhang Y.M."/>
        </authorList>
    </citation>
    <scope>NUCLEOTIDE SEQUENCE [MRNA]</scope>
    <scope>VARIANT ALA-102</scope>
</reference>
<reference key="2">
    <citation type="submission" date="2004-06" db="EMBL/GenBank/DDBJ databases">
        <title>Cloning of human full open reading frames in Gateway(TM) system entry vector (pDONR201).</title>
        <authorList>
            <person name="Ebert L."/>
            <person name="Schick M."/>
            <person name="Neubert P."/>
            <person name="Schatten R."/>
            <person name="Henze S."/>
            <person name="Korn B."/>
        </authorList>
    </citation>
    <scope>NUCLEOTIDE SEQUENCE [LARGE SCALE MRNA]</scope>
</reference>
<reference key="3">
    <citation type="journal article" date="2004" name="Nat. Genet.">
        <title>Complete sequencing and characterization of 21,243 full-length human cDNAs.</title>
        <authorList>
            <person name="Ota T."/>
            <person name="Suzuki Y."/>
            <person name="Nishikawa T."/>
            <person name="Otsuki T."/>
            <person name="Sugiyama T."/>
            <person name="Irie R."/>
            <person name="Wakamatsu A."/>
            <person name="Hayashi K."/>
            <person name="Sato H."/>
            <person name="Nagai K."/>
            <person name="Kimura K."/>
            <person name="Makita H."/>
            <person name="Sekine M."/>
            <person name="Obayashi M."/>
            <person name="Nishi T."/>
            <person name="Shibahara T."/>
            <person name="Tanaka T."/>
            <person name="Ishii S."/>
            <person name="Yamamoto J."/>
            <person name="Saito K."/>
            <person name="Kawai Y."/>
            <person name="Isono Y."/>
            <person name="Nakamura Y."/>
            <person name="Nagahari K."/>
            <person name="Murakami K."/>
            <person name="Yasuda T."/>
            <person name="Iwayanagi T."/>
            <person name="Wagatsuma M."/>
            <person name="Shiratori A."/>
            <person name="Sudo H."/>
            <person name="Hosoiri T."/>
            <person name="Kaku Y."/>
            <person name="Kodaira H."/>
            <person name="Kondo H."/>
            <person name="Sugawara M."/>
            <person name="Takahashi M."/>
            <person name="Kanda K."/>
            <person name="Yokoi T."/>
            <person name="Furuya T."/>
            <person name="Kikkawa E."/>
            <person name="Omura Y."/>
            <person name="Abe K."/>
            <person name="Kamihara K."/>
            <person name="Katsuta N."/>
            <person name="Sato K."/>
            <person name="Tanikawa M."/>
            <person name="Yamazaki M."/>
            <person name="Ninomiya K."/>
            <person name="Ishibashi T."/>
            <person name="Yamashita H."/>
            <person name="Murakawa K."/>
            <person name="Fujimori K."/>
            <person name="Tanai H."/>
            <person name="Kimata M."/>
            <person name="Watanabe M."/>
            <person name="Hiraoka S."/>
            <person name="Chiba Y."/>
            <person name="Ishida S."/>
            <person name="Ono Y."/>
            <person name="Takiguchi S."/>
            <person name="Watanabe S."/>
            <person name="Yosida M."/>
            <person name="Hotuta T."/>
            <person name="Kusano J."/>
            <person name="Kanehori K."/>
            <person name="Takahashi-Fujii A."/>
            <person name="Hara H."/>
            <person name="Tanase T.-O."/>
            <person name="Nomura Y."/>
            <person name="Togiya S."/>
            <person name="Komai F."/>
            <person name="Hara R."/>
            <person name="Takeuchi K."/>
            <person name="Arita M."/>
            <person name="Imose N."/>
            <person name="Musashino K."/>
            <person name="Yuuki H."/>
            <person name="Oshima A."/>
            <person name="Sasaki N."/>
            <person name="Aotsuka S."/>
            <person name="Yoshikawa Y."/>
            <person name="Matsunawa H."/>
            <person name="Ichihara T."/>
            <person name="Shiohata N."/>
            <person name="Sano S."/>
            <person name="Moriya S."/>
            <person name="Momiyama H."/>
            <person name="Satoh N."/>
            <person name="Takami S."/>
            <person name="Terashima Y."/>
            <person name="Suzuki O."/>
            <person name="Nakagawa S."/>
            <person name="Senoh A."/>
            <person name="Mizoguchi H."/>
            <person name="Goto Y."/>
            <person name="Shimizu F."/>
            <person name="Wakebe H."/>
            <person name="Hishigaki H."/>
            <person name="Watanabe T."/>
            <person name="Sugiyama A."/>
            <person name="Takemoto M."/>
            <person name="Kawakami B."/>
            <person name="Yamazaki M."/>
            <person name="Watanabe K."/>
            <person name="Kumagai A."/>
            <person name="Itakura S."/>
            <person name="Fukuzumi Y."/>
            <person name="Fujimori Y."/>
            <person name="Komiyama M."/>
            <person name="Tashiro H."/>
            <person name="Tanigami A."/>
            <person name="Fujiwara T."/>
            <person name="Ono T."/>
            <person name="Yamada K."/>
            <person name="Fujii Y."/>
            <person name="Ozaki K."/>
            <person name="Hirao M."/>
            <person name="Ohmori Y."/>
            <person name="Kawabata A."/>
            <person name="Hikiji T."/>
            <person name="Kobatake N."/>
            <person name="Inagaki H."/>
            <person name="Ikema Y."/>
            <person name="Okamoto S."/>
            <person name="Okitani R."/>
            <person name="Kawakami T."/>
            <person name="Noguchi S."/>
            <person name="Itoh T."/>
            <person name="Shigeta K."/>
            <person name="Senba T."/>
            <person name="Matsumura K."/>
            <person name="Nakajima Y."/>
            <person name="Mizuno T."/>
            <person name="Morinaga M."/>
            <person name="Sasaki M."/>
            <person name="Togashi T."/>
            <person name="Oyama M."/>
            <person name="Hata H."/>
            <person name="Watanabe M."/>
            <person name="Komatsu T."/>
            <person name="Mizushima-Sugano J."/>
            <person name="Satoh T."/>
            <person name="Shirai Y."/>
            <person name="Takahashi Y."/>
            <person name="Nakagawa K."/>
            <person name="Okumura K."/>
            <person name="Nagase T."/>
            <person name="Nomura N."/>
            <person name="Kikuchi H."/>
            <person name="Masuho Y."/>
            <person name="Yamashita R."/>
            <person name="Nakai K."/>
            <person name="Yada T."/>
            <person name="Nakamura Y."/>
            <person name="Ohara O."/>
            <person name="Isogai T."/>
            <person name="Sugano S."/>
        </authorList>
    </citation>
    <scope>NUCLEOTIDE SEQUENCE [LARGE SCALE MRNA]</scope>
</reference>
<reference key="4">
    <citation type="journal article" date="2006" name="Nature">
        <title>The DNA sequence, annotation and analysis of human chromosome 3.</title>
        <authorList>
            <person name="Muzny D.M."/>
            <person name="Scherer S.E."/>
            <person name="Kaul R."/>
            <person name="Wang J."/>
            <person name="Yu J."/>
            <person name="Sudbrak R."/>
            <person name="Buhay C.J."/>
            <person name="Chen R."/>
            <person name="Cree A."/>
            <person name="Ding Y."/>
            <person name="Dugan-Rocha S."/>
            <person name="Gill R."/>
            <person name="Gunaratne P."/>
            <person name="Harris R.A."/>
            <person name="Hawes A.C."/>
            <person name="Hernandez J."/>
            <person name="Hodgson A.V."/>
            <person name="Hume J."/>
            <person name="Jackson A."/>
            <person name="Khan Z.M."/>
            <person name="Kovar-Smith C."/>
            <person name="Lewis L.R."/>
            <person name="Lozado R.J."/>
            <person name="Metzker M.L."/>
            <person name="Milosavljevic A."/>
            <person name="Miner G.R."/>
            <person name="Morgan M.B."/>
            <person name="Nazareth L.V."/>
            <person name="Scott G."/>
            <person name="Sodergren E."/>
            <person name="Song X.-Z."/>
            <person name="Steffen D."/>
            <person name="Wei S."/>
            <person name="Wheeler D.A."/>
            <person name="Wright M.W."/>
            <person name="Worley K.C."/>
            <person name="Yuan Y."/>
            <person name="Zhang Z."/>
            <person name="Adams C.Q."/>
            <person name="Ansari-Lari M.A."/>
            <person name="Ayele M."/>
            <person name="Brown M.J."/>
            <person name="Chen G."/>
            <person name="Chen Z."/>
            <person name="Clendenning J."/>
            <person name="Clerc-Blankenburg K.P."/>
            <person name="Chen R."/>
            <person name="Chen Z."/>
            <person name="Davis C."/>
            <person name="Delgado O."/>
            <person name="Dinh H.H."/>
            <person name="Dong W."/>
            <person name="Draper H."/>
            <person name="Ernst S."/>
            <person name="Fu G."/>
            <person name="Gonzalez-Garay M.L."/>
            <person name="Garcia D.K."/>
            <person name="Gillett W."/>
            <person name="Gu J."/>
            <person name="Hao B."/>
            <person name="Haugen E."/>
            <person name="Havlak P."/>
            <person name="He X."/>
            <person name="Hennig S."/>
            <person name="Hu S."/>
            <person name="Huang W."/>
            <person name="Jackson L.R."/>
            <person name="Jacob L.S."/>
            <person name="Kelly S.H."/>
            <person name="Kube M."/>
            <person name="Levy R."/>
            <person name="Li Z."/>
            <person name="Liu B."/>
            <person name="Liu J."/>
            <person name="Liu W."/>
            <person name="Lu J."/>
            <person name="Maheshwari M."/>
            <person name="Nguyen B.-V."/>
            <person name="Okwuonu G.O."/>
            <person name="Palmeiri A."/>
            <person name="Pasternak S."/>
            <person name="Perez L.M."/>
            <person name="Phelps K.A."/>
            <person name="Plopper F.J."/>
            <person name="Qiang B."/>
            <person name="Raymond C."/>
            <person name="Rodriguez R."/>
            <person name="Saenphimmachak C."/>
            <person name="Santibanez J."/>
            <person name="Shen H."/>
            <person name="Shen Y."/>
            <person name="Subramanian S."/>
            <person name="Tabor P.E."/>
            <person name="Verduzco D."/>
            <person name="Waldron L."/>
            <person name="Wang J."/>
            <person name="Wang J."/>
            <person name="Wang Q."/>
            <person name="Williams G.A."/>
            <person name="Wong G.K.-S."/>
            <person name="Yao Z."/>
            <person name="Zhang J."/>
            <person name="Zhang X."/>
            <person name="Zhao G."/>
            <person name="Zhou J."/>
            <person name="Zhou Y."/>
            <person name="Nelson D."/>
            <person name="Lehrach H."/>
            <person name="Reinhardt R."/>
            <person name="Naylor S.L."/>
            <person name="Yang H."/>
            <person name="Olson M."/>
            <person name="Weinstock G."/>
            <person name="Gibbs R.A."/>
        </authorList>
    </citation>
    <scope>NUCLEOTIDE SEQUENCE [LARGE SCALE GENOMIC DNA]</scope>
</reference>
<reference key="5">
    <citation type="submission" date="2005-09" db="EMBL/GenBank/DDBJ databases">
        <authorList>
            <person name="Mural R.J."/>
            <person name="Istrail S."/>
            <person name="Sutton G.G."/>
            <person name="Florea L."/>
            <person name="Halpern A.L."/>
            <person name="Mobarry C.M."/>
            <person name="Lippert R."/>
            <person name="Walenz B."/>
            <person name="Shatkay H."/>
            <person name="Dew I."/>
            <person name="Miller J.R."/>
            <person name="Flanigan M.J."/>
            <person name="Edwards N.J."/>
            <person name="Bolanos R."/>
            <person name="Fasulo D."/>
            <person name="Halldorsson B.V."/>
            <person name="Hannenhalli S."/>
            <person name="Turner R."/>
            <person name="Yooseph S."/>
            <person name="Lu F."/>
            <person name="Nusskern D.R."/>
            <person name="Shue B.C."/>
            <person name="Zheng X.H."/>
            <person name="Zhong F."/>
            <person name="Delcher A.L."/>
            <person name="Huson D.H."/>
            <person name="Kravitz S.A."/>
            <person name="Mouchard L."/>
            <person name="Reinert K."/>
            <person name="Remington K.A."/>
            <person name="Clark A.G."/>
            <person name="Waterman M.S."/>
            <person name="Eichler E.E."/>
            <person name="Adams M.D."/>
            <person name="Hunkapiller M.W."/>
            <person name="Myers E.W."/>
            <person name="Venter J.C."/>
        </authorList>
    </citation>
    <scope>NUCLEOTIDE SEQUENCE [LARGE SCALE GENOMIC DNA]</scope>
</reference>
<reference key="6">
    <citation type="journal article" date="2004" name="Genome Res.">
        <title>The status, quality, and expansion of the NIH full-length cDNA project: the Mammalian Gene Collection (MGC).</title>
        <authorList>
            <consortium name="The MGC Project Team"/>
        </authorList>
    </citation>
    <scope>NUCLEOTIDE SEQUENCE [LARGE SCALE MRNA]</scope>
    <source>
        <tissue>Skin</tissue>
        <tissue>Urinary bladder</tissue>
    </source>
</reference>
<reference key="7">
    <citation type="submission" date="2005-11" db="UniProtKB">
        <authorList>
            <person name="Bienvenut W.V."/>
            <person name="Claeys D."/>
        </authorList>
    </citation>
    <scope>PROTEIN SEQUENCE OF 36-45 AND 117-124</scope>
    <scope>IDENTIFICATION BY MASS SPECTROMETRY</scope>
    <source>
        <tissue>Platelet</tissue>
    </source>
</reference>
<reference key="8">
    <citation type="journal article" date="2005" name="Am. J. Hum. Genet.">
        <title>Mutations within the programmed cell death 10 gene cause cerebral cavernous malformations.</title>
        <authorList>
            <person name="Bergametti F."/>
            <person name="Denier C."/>
            <person name="Labauge P."/>
            <person name="Arnoult M."/>
            <person name="Boetto S."/>
            <person name="Clanet M."/>
            <person name="Coubes P."/>
            <person name="Echenne B."/>
            <person name="Ibrahim R."/>
            <person name="Irthum B."/>
            <person name="Jacquet G."/>
            <person name="Lonjon M."/>
            <person name="Moreau J.J."/>
            <person name="Neau J.P."/>
            <person name="Parker F."/>
            <person name="Tremoulet M."/>
            <person name="Tournier-Lasserve E."/>
        </authorList>
    </citation>
    <scope>FUNCTION</scope>
    <scope>TISSUE SPECIFICITY</scope>
    <scope>INVOLVEMENT IN CCM3</scope>
</reference>
<reference key="9">
    <citation type="journal article" date="2007" name="Mol. Biol. Cell">
        <title>PDCD10 interacts with Ste20-related kinase MST4 to promote cell growth and transformation via modulation of the ERK pathway.</title>
        <authorList>
            <person name="Ma X."/>
            <person name="Zhao H."/>
            <person name="Shan J."/>
            <person name="Long F."/>
            <person name="Chen Y."/>
            <person name="Chen Y."/>
            <person name="Zhang Y."/>
            <person name="Han X."/>
            <person name="Ma D."/>
        </authorList>
    </citation>
    <scope>INTERACTION WITH STK26</scope>
    <scope>FUNCTION</scope>
    <scope>SUBCELLULAR LOCATION</scope>
</reference>
<reference key="10">
    <citation type="journal article" date="2009" name="Hum. Mutat.">
        <title>Functional analyses of human and zebrafish 18-amino acid in-frame deletion pave the way for domain mapping of the cerebral cavernous malformation 3 protein.</title>
        <authorList>
            <person name="Voss K."/>
            <person name="Stahl S."/>
            <person name="Hogan B.M."/>
            <person name="Reinders J."/>
            <person name="Schleider E."/>
            <person name="Schulte-Merker S."/>
            <person name="Felbor U."/>
        </authorList>
    </citation>
    <scope>INTERACTION WITH CCM2; STK25 AND STK26</scope>
    <scope>IDENTIFICATION IN A COMPLEX WITH KRIT1 AND CCM2</scope>
</reference>
<reference key="11">
    <citation type="journal article" date="2009" name="Mol. Cell. Proteomics">
        <title>A PP2A phosphatase high density interaction network identifies a novel striatin-interacting phosphatase and kinase complex linked to the cerebral cavernous malformation 3 (CCM3) protein.</title>
        <authorList>
            <person name="Goudreault M."/>
            <person name="D'Ambrosio L.M."/>
            <person name="Kean M.J."/>
            <person name="Mullin M.J."/>
            <person name="Larsen B.G."/>
            <person name="Sanchez A."/>
            <person name="Chaudhry S."/>
            <person name="Chen G.I."/>
            <person name="Sicheri F."/>
            <person name="Nesvizhskii A.I."/>
            <person name="Aebersold R."/>
            <person name="Raught B."/>
            <person name="Gingras A.C."/>
        </authorList>
    </citation>
    <scope>IDENTIFICATION IN STRIPAK COMPLEX</scope>
    <scope>FUNCTION</scope>
</reference>
<reference key="12">
    <citation type="journal article" date="2009" name="Science">
        <title>Lysine acetylation targets protein complexes and co-regulates major cellular functions.</title>
        <authorList>
            <person name="Choudhary C."/>
            <person name="Kumar C."/>
            <person name="Gnad F."/>
            <person name="Nielsen M.L."/>
            <person name="Rehman M."/>
            <person name="Walther T.C."/>
            <person name="Olsen J.V."/>
            <person name="Mann M."/>
        </authorList>
    </citation>
    <scope>ACETYLATION [LARGE SCALE ANALYSIS] AT LYS-179</scope>
    <scope>IDENTIFICATION BY MASS SPECTROMETRY [LARGE SCALE ANALYSIS]</scope>
</reference>
<reference key="13">
    <citation type="journal article" date="2010" name="J. Cell Sci.">
        <title>CCM3/PDCD10 stabilizes GCKIII proteins to promote Golgi assembly and cell orientation.</title>
        <authorList>
            <person name="Fidalgo M."/>
            <person name="Fraile M."/>
            <person name="Pires A."/>
            <person name="Force T."/>
            <person name="Pombo C."/>
            <person name="Zalvide J."/>
        </authorList>
    </citation>
    <scope>FUNCTION</scope>
    <scope>INTERACTION WITH GOLGA2; STK24; STK25 AND STK26</scope>
    <scope>SUBCELLULAR LOCATION</scope>
</reference>
<reference key="14">
    <citation type="journal article" date="2011" name="BMC Syst. Biol.">
        <title>Initial characterization of the human central proteome.</title>
        <authorList>
            <person name="Burkard T.R."/>
            <person name="Planyavsky M."/>
            <person name="Kaupe I."/>
            <person name="Breitwieser F.P."/>
            <person name="Buerckstuemmer T."/>
            <person name="Bennett K.L."/>
            <person name="Superti-Furga G."/>
            <person name="Colinge J."/>
        </authorList>
    </citation>
    <scope>IDENTIFICATION BY MASS SPECTROMETRY [LARGE SCALE ANALYSIS]</scope>
</reference>
<reference key="15">
    <citation type="journal article" date="2015" name="Proteomics">
        <title>N-terminome analysis of the human mitochondrial proteome.</title>
        <authorList>
            <person name="Vaca Jacome A.S."/>
            <person name="Rabilloud T."/>
            <person name="Schaeffer-Reiss C."/>
            <person name="Rompais M."/>
            <person name="Ayoub D."/>
            <person name="Lane L."/>
            <person name="Bairoch A."/>
            <person name="Van Dorsselaer A."/>
            <person name="Carapito C."/>
        </authorList>
    </citation>
    <scope>IDENTIFICATION BY MASS SPECTROMETRY [LARGE SCALE ANALYSIS]</scope>
</reference>
<reference key="16">
    <citation type="journal article" date="2016" name="J. Cell Sci.">
        <title>RHO binding to FAM65A regulates Golgi reorientation during cell migration.</title>
        <authorList>
            <person name="Mardakheh F.K."/>
            <person name="Self A."/>
            <person name="Marshall C.J."/>
        </authorList>
    </citation>
    <scope>FUNCTION</scope>
    <scope>INTERACTION WITH RIPOR1; STK24 AND STK26</scope>
</reference>
<reference key="17">
    <citation type="journal article" date="2017" name="Nat. Struct. Mol. Biol.">
        <title>Site-specific mapping of the human SUMO proteome reveals co-modification with phosphorylation.</title>
        <authorList>
            <person name="Hendriks I.A."/>
            <person name="Lyon D."/>
            <person name="Young C."/>
            <person name="Jensen L.J."/>
            <person name="Vertegaal A.C."/>
            <person name="Nielsen M.L."/>
        </authorList>
    </citation>
    <scope>SUMOYLATION [LARGE SCALE ANALYSIS] AT LYS-186</scope>
    <scope>IDENTIFICATION BY MASS SPECTROMETRY [LARGE SCALE ANALYSIS]</scope>
</reference>
<reference key="18">
    <citation type="journal article" date="2024" name="Cell Rep.">
        <title>Evolution of chromosome-arm aberrations in breast cancer through genetic network rewiring.</title>
        <authorList>
            <person name="Kuzmin E."/>
            <person name="Baker T.M."/>
            <person name="Lesluyes T."/>
            <person name="Monlong J."/>
            <person name="Abe K.T."/>
            <person name="Coelho P.P."/>
            <person name="Schwartz M."/>
            <person name="Del Corpo J."/>
            <person name="Zou D."/>
            <person name="Morin G."/>
            <person name="Pacis A."/>
            <person name="Yang Y."/>
            <person name="Martinez C."/>
            <person name="Barber J."/>
            <person name="Kuasne H."/>
            <person name="Li R."/>
            <person name="Bourgey M."/>
            <person name="Fortier A.M."/>
            <person name="Davison P.G."/>
            <person name="Omeroglu A."/>
            <person name="Guiot M.C."/>
            <person name="Morris Q."/>
            <person name="Kleinman C.L."/>
            <person name="Huang S."/>
            <person name="Gingras A.C."/>
            <person name="Ragoussis J."/>
            <person name="Bourque G."/>
            <person name="Van Loo P."/>
            <person name="Park M."/>
        </authorList>
    </citation>
    <scope>SUBUNIT</scope>
</reference>
<reference key="19">
    <citation type="journal article" date="2010" name="J. Biol. Chem.">
        <title>Crystal structure of CCM3, a cerebral cavernous malformation protein critical for vascular integrity.</title>
        <authorList>
            <person name="Li X."/>
            <person name="Zhang R."/>
            <person name="Zhang H."/>
            <person name="He Y."/>
            <person name="Ji W."/>
            <person name="Min W."/>
            <person name="Boggon T.J."/>
        </authorList>
    </citation>
    <scope>X-RAY CRYSTALLOGRAPHY (2.5 ANGSTROMS)</scope>
    <scope>SUBUNIT</scope>
    <scope>INTERACTION WITH CCM2 AND PXN</scope>
    <scope>SUBCELLULAR LOCATION</scope>
    <scope>MUTAGENESIS OF LYS-132; ALA-135; LYS-139; LYS-172; SER-175 AND LYS-179</scope>
</reference>
<dbReference type="EMBL" id="AF022385">
    <property type="protein sequence ID" value="AAB72225.1"/>
    <property type="molecule type" value="mRNA"/>
</dbReference>
<dbReference type="EMBL" id="CR457107">
    <property type="protein sequence ID" value="CAG33388.1"/>
    <property type="molecule type" value="mRNA"/>
</dbReference>
<dbReference type="EMBL" id="AK291130">
    <property type="protein sequence ID" value="BAF83819.1"/>
    <property type="molecule type" value="mRNA"/>
</dbReference>
<dbReference type="EMBL" id="AC079822">
    <property type="status" value="NOT_ANNOTATED_CDS"/>
    <property type="molecule type" value="Genomic_DNA"/>
</dbReference>
<dbReference type="EMBL" id="CH471052">
    <property type="protein sequence ID" value="EAW78574.1"/>
    <property type="molecule type" value="Genomic_DNA"/>
</dbReference>
<dbReference type="EMBL" id="CH471052">
    <property type="protein sequence ID" value="EAW78575.1"/>
    <property type="molecule type" value="Genomic_DNA"/>
</dbReference>
<dbReference type="EMBL" id="CH471052">
    <property type="protein sequence ID" value="EAW78576.1"/>
    <property type="molecule type" value="Genomic_DNA"/>
</dbReference>
<dbReference type="EMBL" id="CH471052">
    <property type="protein sequence ID" value="EAW78577.1"/>
    <property type="molecule type" value="Genomic_DNA"/>
</dbReference>
<dbReference type="EMBL" id="CH471052">
    <property type="protein sequence ID" value="EAW78578.1"/>
    <property type="molecule type" value="Genomic_DNA"/>
</dbReference>
<dbReference type="EMBL" id="CH471052">
    <property type="protein sequence ID" value="EAW78580.1"/>
    <property type="molecule type" value="Genomic_DNA"/>
</dbReference>
<dbReference type="EMBL" id="CH471052">
    <property type="protein sequence ID" value="EAW78581.1"/>
    <property type="molecule type" value="Genomic_DNA"/>
</dbReference>
<dbReference type="EMBL" id="BC002506">
    <property type="protein sequence ID" value="AAH02506.1"/>
    <property type="molecule type" value="mRNA"/>
</dbReference>
<dbReference type="EMBL" id="BC016353">
    <property type="protein sequence ID" value="AAH16353.1"/>
    <property type="molecule type" value="mRNA"/>
</dbReference>
<dbReference type="CCDS" id="CCDS3202.1"/>
<dbReference type="RefSeq" id="NP_009148.2">
    <property type="nucleotide sequence ID" value="NM_007217.3"/>
</dbReference>
<dbReference type="RefSeq" id="NP_665858.1">
    <property type="nucleotide sequence ID" value="NM_145859.2"/>
</dbReference>
<dbReference type="RefSeq" id="NP_665859.1">
    <property type="nucleotide sequence ID" value="NM_145860.2"/>
</dbReference>
<dbReference type="RefSeq" id="XP_005247143.1">
    <property type="nucleotide sequence ID" value="XM_005247086.6"/>
</dbReference>
<dbReference type="RefSeq" id="XP_005247144.1">
    <property type="nucleotide sequence ID" value="XM_005247087.6"/>
</dbReference>
<dbReference type="RefSeq" id="XP_005247145.1">
    <property type="nucleotide sequence ID" value="XM_005247088.5"/>
</dbReference>
<dbReference type="RefSeq" id="XP_006713548.1">
    <property type="nucleotide sequence ID" value="XM_006713485.5"/>
</dbReference>
<dbReference type="RefSeq" id="XP_011510670.1">
    <property type="nucleotide sequence ID" value="XM_011512368.4"/>
</dbReference>
<dbReference type="RefSeq" id="XP_011510671.1">
    <property type="nucleotide sequence ID" value="XM_011512369.4"/>
</dbReference>
<dbReference type="RefSeq" id="XP_016861133.1">
    <property type="nucleotide sequence ID" value="XM_017005644.3"/>
</dbReference>
<dbReference type="RefSeq" id="XP_047303330.1">
    <property type="nucleotide sequence ID" value="XM_047447374.1"/>
</dbReference>
<dbReference type="RefSeq" id="XP_047303331.1">
    <property type="nucleotide sequence ID" value="XM_047447375.1"/>
</dbReference>
<dbReference type="RefSeq" id="XP_054201068.1">
    <property type="nucleotide sequence ID" value="XM_054345093.1"/>
</dbReference>
<dbReference type="RefSeq" id="XP_054201069.1">
    <property type="nucleotide sequence ID" value="XM_054345094.1"/>
</dbReference>
<dbReference type="RefSeq" id="XP_054201070.1">
    <property type="nucleotide sequence ID" value="XM_054345095.1"/>
</dbReference>
<dbReference type="RefSeq" id="XP_054201071.1">
    <property type="nucleotide sequence ID" value="XM_054345096.1"/>
</dbReference>
<dbReference type="RefSeq" id="XP_054201072.1">
    <property type="nucleotide sequence ID" value="XM_054345097.1"/>
</dbReference>
<dbReference type="RefSeq" id="XP_054201073.1">
    <property type="nucleotide sequence ID" value="XM_054345098.1"/>
</dbReference>
<dbReference type="RefSeq" id="XP_054201074.1">
    <property type="nucleotide sequence ID" value="XM_054345099.1"/>
</dbReference>
<dbReference type="RefSeq" id="XP_054201075.1">
    <property type="nucleotide sequence ID" value="XM_054345100.1"/>
</dbReference>
<dbReference type="RefSeq" id="XP_054201076.1">
    <property type="nucleotide sequence ID" value="XM_054345101.1"/>
</dbReference>
<dbReference type="PDB" id="3AJM">
    <property type="method" value="X-ray"/>
    <property type="resolution" value="2.30 A"/>
    <property type="chains" value="A/B=8-212"/>
</dbReference>
<dbReference type="PDB" id="3L8I">
    <property type="method" value="X-ray"/>
    <property type="resolution" value="2.50 A"/>
    <property type="chains" value="A/B/C/D=1-212"/>
</dbReference>
<dbReference type="PDB" id="3L8J">
    <property type="method" value="X-ray"/>
    <property type="resolution" value="3.05 A"/>
    <property type="chains" value="A=14-212"/>
</dbReference>
<dbReference type="PDB" id="3RQE">
    <property type="method" value="X-ray"/>
    <property type="resolution" value="2.80 A"/>
    <property type="chains" value="A/B/C/D=1-212"/>
</dbReference>
<dbReference type="PDB" id="3RQF">
    <property type="method" value="X-ray"/>
    <property type="resolution" value="2.70 A"/>
    <property type="chains" value="A/B/C/D=1-212"/>
</dbReference>
<dbReference type="PDB" id="3RQG">
    <property type="method" value="X-ray"/>
    <property type="resolution" value="2.50 A"/>
    <property type="chains" value="A/B/C/D=1-212"/>
</dbReference>
<dbReference type="PDB" id="3W8H">
    <property type="method" value="X-ray"/>
    <property type="resolution" value="2.43 A"/>
    <property type="chains" value="A=8-212"/>
</dbReference>
<dbReference type="PDB" id="3W8I">
    <property type="method" value="X-ray"/>
    <property type="resolution" value="2.40 A"/>
    <property type="chains" value="A=8-212"/>
</dbReference>
<dbReference type="PDB" id="4GEH">
    <property type="method" value="X-ray"/>
    <property type="resolution" value="1.95 A"/>
    <property type="chains" value="A/C=9-212"/>
</dbReference>
<dbReference type="PDB" id="4TVQ">
    <property type="method" value="X-ray"/>
    <property type="resolution" value="2.80 A"/>
    <property type="chains" value="A/B/C/D=1-212"/>
</dbReference>
<dbReference type="PDBsum" id="3AJM"/>
<dbReference type="PDBsum" id="3L8I"/>
<dbReference type="PDBsum" id="3L8J"/>
<dbReference type="PDBsum" id="3RQE"/>
<dbReference type="PDBsum" id="3RQF"/>
<dbReference type="PDBsum" id="3RQG"/>
<dbReference type="PDBsum" id="3W8H"/>
<dbReference type="PDBsum" id="3W8I"/>
<dbReference type="PDBsum" id="4GEH"/>
<dbReference type="PDBsum" id="4TVQ"/>
<dbReference type="SMR" id="Q9BUL8"/>
<dbReference type="BioGRID" id="116400">
    <property type="interactions" value="117"/>
</dbReference>
<dbReference type="ComplexPortal" id="CPX-984">
    <property type="entry name" value="CCM endothelial permeability complex"/>
</dbReference>
<dbReference type="CORUM" id="Q9BUL8"/>
<dbReference type="DIP" id="DIP-40607N"/>
<dbReference type="FunCoup" id="Q9BUL8">
    <property type="interactions" value="3958"/>
</dbReference>
<dbReference type="IntAct" id="Q9BUL8">
    <property type="interactions" value="66"/>
</dbReference>
<dbReference type="MINT" id="Q9BUL8"/>
<dbReference type="STRING" id="9606.ENSP00000376506"/>
<dbReference type="iPTMnet" id="Q9BUL8"/>
<dbReference type="MetOSite" id="Q9BUL8"/>
<dbReference type="PhosphoSitePlus" id="Q9BUL8"/>
<dbReference type="BioMuta" id="PDCD10"/>
<dbReference type="DMDM" id="74733232"/>
<dbReference type="OGP" id="Q9BUL8"/>
<dbReference type="jPOST" id="Q9BUL8"/>
<dbReference type="MassIVE" id="Q9BUL8"/>
<dbReference type="PaxDb" id="9606-ENSP00000376506"/>
<dbReference type="PeptideAtlas" id="Q9BUL8"/>
<dbReference type="ProteomicsDB" id="79108"/>
<dbReference type="Pumba" id="Q9BUL8"/>
<dbReference type="TopDownProteomics" id="Q9BUL8"/>
<dbReference type="Antibodypedia" id="18593">
    <property type="antibodies" value="271 antibodies from 31 providers"/>
</dbReference>
<dbReference type="DNASU" id="11235"/>
<dbReference type="Ensembl" id="ENST00000392750.7">
    <property type="protein sequence ID" value="ENSP00000376506.2"/>
    <property type="gene ID" value="ENSG00000114209.15"/>
</dbReference>
<dbReference type="Ensembl" id="ENST00000461494.5">
    <property type="protein sequence ID" value="ENSP00000420021.1"/>
    <property type="gene ID" value="ENSG00000114209.15"/>
</dbReference>
<dbReference type="Ensembl" id="ENST00000470131.5">
    <property type="protein sequence ID" value="ENSP00000417202.1"/>
    <property type="gene ID" value="ENSG00000114209.15"/>
</dbReference>
<dbReference type="Ensembl" id="ENST00000473645.6">
    <property type="protein sequence ID" value="ENSP00000418317.2"/>
    <property type="gene ID" value="ENSG00000114209.15"/>
</dbReference>
<dbReference type="Ensembl" id="ENST00000497056.6">
    <property type="protein sequence ID" value="ENSP00000420553.2"/>
    <property type="gene ID" value="ENSG00000114209.15"/>
</dbReference>
<dbReference type="GeneID" id="11235"/>
<dbReference type="KEGG" id="hsa:11235"/>
<dbReference type="MANE-Select" id="ENST00000392750.7">
    <property type="protein sequence ID" value="ENSP00000376506.2"/>
    <property type="RefSeq nucleotide sequence ID" value="NM_007217.4"/>
    <property type="RefSeq protein sequence ID" value="NP_009148.2"/>
</dbReference>
<dbReference type="UCSC" id="uc003fex.5">
    <property type="organism name" value="human"/>
</dbReference>
<dbReference type="AGR" id="HGNC:8761"/>
<dbReference type="CTD" id="11235"/>
<dbReference type="DisGeNET" id="11235"/>
<dbReference type="GeneCards" id="PDCD10"/>
<dbReference type="GeneReviews" id="PDCD10"/>
<dbReference type="HGNC" id="HGNC:8761">
    <property type="gene designation" value="PDCD10"/>
</dbReference>
<dbReference type="HPA" id="ENSG00000114209">
    <property type="expression patterns" value="Low tissue specificity"/>
</dbReference>
<dbReference type="MalaCards" id="PDCD10"/>
<dbReference type="MIM" id="603285">
    <property type="type" value="phenotype"/>
</dbReference>
<dbReference type="MIM" id="609118">
    <property type="type" value="gene"/>
</dbReference>
<dbReference type="neXtProt" id="NX_Q9BUL8"/>
<dbReference type="OpenTargets" id="ENSG00000114209"/>
<dbReference type="Orphanet" id="221061">
    <property type="disease" value="Familial cerebral cavernous malformation"/>
</dbReference>
<dbReference type="PharmGKB" id="PA33111"/>
<dbReference type="VEuPathDB" id="HostDB:ENSG00000114209"/>
<dbReference type="eggNOG" id="KOG4025">
    <property type="taxonomic scope" value="Eukaryota"/>
</dbReference>
<dbReference type="GeneTree" id="ENSGT00390000017913"/>
<dbReference type="InParanoid" id="Q9BUL8"/>
<dbReference type="OMA" id="HVVLFPI"/>
<dbReference type="OrthoDB" id="6017654at2759"/>
<dbReference type="PAN-GO" id="Q9BUL8">
    <property type="GO annotations" value="5 GO annotations based on evolutionary models"/>
</dbReference>
<dbReference type="PhylomeDB" id="Q9BUL8"/>
<dbReference type="TreeFam" id="TF105802"/>
<dbReference type="PathwayCommons" id="Q9BUL8"/>
<dbReference type="SignaLink" id="Q9BUL8"/>
<dbReference type="SIGNOR" id="Q9BUL8"/>
<dbReference type="BioGRID-ORCS" id="11235">
    <property type="hits" value="82 hits in 1176 CRISPR screens"/>
</dbReference>
<dbReference type="ChiTaRS" id="PDCD10">
    <property type="organism name" value="human"/>
</dbReference>
<dbReference type="EvolutionaryTrace" id="Q9BUL8"/>
<dbReference type="GeneWiki" id="PDCD10"/>
<dbReference type="GenomeRNAi" id="11235"/>
<dbReference type="Pharos" id="Q9BUL8">
    <property type="development level" value="Tbio"/>
</dbReference>
<dbReference type="PRO" id="PR:Q9BUL8"/>
<dbReference type="Proteomes" id="UP000005640">
    <property type="component" value="Chromosome 3"/>
</dbReference>
<dbReference type="RNAct" id="Q9BUL8">
    <property type="molecule type" value="protein"/>
</dbReference>
<dbReference type="Bgee" id="ENSG00000114209">
    <property type="expression patterns" value="Expressed in jejunal mucosa and 214 other cell types or tissues"/>
</dbReference>
<dbReference type="ExpressionAtlas" id="Q9BUL8">
    <property type="expression patterns" value="baseline and differential"/>
</dbReference>
<dbReference type="GO" id="GO:0005737">
    <property type="term" value="C:cytoplasm"/>
    <property type="evidence" value="ECO:0000314"/>
    <property type="project" value="UniProtKB"/>
</dbReference>
<dbReference type="GO" id="GO:0005829">
    <property type="term" value="C:cytosol"/>
    <property type="evidence" value="ECO:0000314"/>
    <property type="project" value="UniProtKB"/>
</dbReference>
<dbReference type="GO" id="GO:0070062">
    <property type="term" value="C:extracellular exosome"/>
    <property type="evidence" value="ECO:0007005"/>
    <property type="project" value="UniProtKB"/>
</dbReference>
<dbReference type="GO" id="GO:0090443">
    <property type="term" value="C:FAR/SIN/STRIPAK complex"/>
    <property type="evidence" value="ECO:0000314"/>
    <property type="project" value="UniProtKB"/>
</dbReference>
<dbReference type="GO" id="GO:0005794">
    <property type="term" value="C:Golgi apparatus"/>
    <property type="evidence" value="ECO:0000314"/>
    <property type="project" value="UniProtKB"/>
</dbReference>
<dbReference type="GO" id="GO:0000139">
    <property type="term" value="C:Golgi membrane"/>
    <property type="evidence" value="ECO:0007669"/>
    <property type="project" value="UniProtKB-SubCell"/>
</dbReference>
<dbReference type="GO" id="GO:0005886">
    <property type="term" value="C:plasma membrane"/>
    <property type="evidence" value="ECO:0007669"/>
    <property type="project" value="UniProtKB-SubCell"/>
</dbReference>
<dbReference type="GO" id="GO:0042803">
    <property type="term" value="F:protein homodimerization activity"/>
    <property type="evidence" value="ECO:0000353"/>
    <property type="project" value="UniProtKB"/>
</dbReference>
<dbReference type="GO" id="GO:0019901">
    <property type="term" value="F:protein kinase binding"/>
    <property type="evidence" value="ECO:0000318"/>
    <property type="project" value="GO_Central"/>
</dbReference>
<dbReference type="GO" id="GO:0001525">
    <property type="term" value="P:angiogenesis"/>
    <property type="evidence" value="ECO:0007669"/>
    <property type="project" value="UniProtKB-KW"/>
</dbReference>
<dbReference type="GO" id="GO:1990830">
    <property type="term" value="P:cellular response to leukemia inhibitory factor"/>
    <property type="evidence" value="ECO:0007669"/>
    <property type="project" value="Ensembl"/>
</dbReference>
<dbReference type="GO" id="GO:0003158">
    <property type="term" value="P:endothelium development"/>
    <property type="evidence" value="ECO:0000303"/>
    <property type="project" value="ComplexPortal"/>
</dbReference>
<dbReference type="GO" id="GO:0051683">
    <property type="term" value="P:establishment of Golgi localization"/>
    <property type="evidence" value="ECO:0000315"/>
    <property type="project" value="UniProtKB"/>
</dbReference>
<dbReference type="GO" id="GO:0090168">
    <property type="term" value="P:Golgi reassembly"/>
    <property type="evidence" value="ECO:0000315"/>
    <property type="project" value="UniProtKB"/>
</dbReference>
<dbReference type="GO" id="GO:0035556">
    <property type="term" value="P:intracellular signal transduction"/>
    <property type="evidence" value="ECO:0000315"/>
    <property type="project" value="UniProtKB"/>
</dbReference>
<dbReference type="GO" id="GO:0036481">
    <property type="term" value="P:intrinsic apoptotic signaling pathway in response to hydrogen peroxide"/>
    <property type="evidence" value="ECO:0000316"/>
    <property type="project" value="UniProtKB"/>
</dbReference>
<dbReference type="GO" id="GO:0043066">
    <property type="term" value="P:negative regulation of apoptotic process"/>
    <property type="evidence" value="ECO:0000314"/>
    <property type="project" value="UniProtKB"/>
</dbReference>
<dbReference type="GO" id="GO:1903588">
    <property type="term" value="P:negative regulation of blood vessel endothelial cell proliferation involved in sprouting angiogenesis"/>
    <property type="evidence" value="ECO:0000315"/>
    <property type="project" value="UniProtKB"/>
</dbReference>
<dbReference type="GO" id="GO:0090051">
    <property type="term" value="P:negative regulation of cell migration involved in sprouting angiogenesis"/>
    <property type="evidence" value="ECO:0000315"/>
    <property type="project" value="UniProtKB"/>
</dbReference>
<dbReference type="GO" id="GO:0010629">
    <property type="term" value="P:negative regulation of gene expression"/>
    <property type="evidence" value="ECO:0000315"/>
    <property type="project" value="UniProtKB"/>
</dbReference>
<dbReference type="GO" id="GO:0030335">
    <property type="term" value="P:positive regulation of cell migration"/>
    <property type="evidence" value="ECO:0000314"/>
    <property type="project" value="UniProtKB"/>
</dbReference>
<dbReference type="GO" id="GO:0008284">
    <property type="term" value="P:positive regulation of cell population proliferation"/>
    <property type="evidence" value="ECO:0000314"/>
    <property type="project" value="UniProtKB"/>
</dbReference>
<dbReference type="GO" id="GO:0010628">
    <property type="term" value="P:positive regulation of gene expression"/>
    <property type="evidence" value="ECO:0000315"/>
    <property type="project" value="UniProtKB"/>
</dbReference>
<dbReference type="GO" id="GO:0090316">
    <property type="term" value="P:positive regulation of intracellular protein transport"/>
    <property type="evidence" value="ECO:0000315"/>
    <property type="project" value="UniProtKB"/>
</dbReference>
<dbReference type="GO" id="GO:0043406">
    <property type="term" value="P:positive regulation of MAP kinase activity"/>
    <property type="evidence" value="ECO:0000314"/>
    <property type="project" value="UniProtKB"/>
</dbReference>
<dbReference type="GO" id="GO:0045747">
    <property type="term" value="P:positive regulation of Notch signaling pathway"/>
    <property type="evidence" value="ECO:0000315"/>
    <property type="project" value="UniProtKB"/>
</dbReference>
<dbReference type="GO" id="GO:0033138">
    <property type="term" value="P:positive regulation of peptidyl-serine phosphorylation"/>
    <property type="evidence" value="ECO:0000315"/>
    <property type="project" value="UniProtKB"/>
</dbReference>
<dbReference type="GO" id="GO:0071902">
    <property type="term" value="P:positive regulation of protein serine/threonine kinase activity"/>
    <property type="evidence" value="ECO:0000315"/>
    <property type="project" value="UniProtKB"/>
</dbReference>
<dbReference type="GO" id="GO:0032874">
    <property type="term" value="P:positive regulation of stress-activated MAPK cascade"/>
    <property type="evidence" value="ECO:0000314"/>
    <property type="project" value="UniProtKB"/>
</dbReference>
<dbReference type="GO" id="GO:0050821">
    <property type="term" value="P:protein stabilization"/>
    <property type="evidence" value="ECO:0000315"/>
    <property type="project" value="UniProtKB"/>
</dbReference>
<dbReference type="GO" id="GO:0045765">
    <property type="term" value="P:regulation of angiogenesis"/>
    <property type="evidence" value="ECO:0000303"/>
    <property type="project" value="ComplexPortal"/>
</dbReference>
<dbReference type="GO" id="GO:0044319">
    <property type="term" value="P:wound healing, spreading of cells"/>
    <property type="evidence" value="ECO:0000315"/>
    <property type="project" value="UniProtKB"/>
</dbReference>
<dbReference type="FunFam" id="1.10.12.70:FF:000001">
    <property type="entry name" value="Programmed cell death protein 10"/>
    <property type="match status" value="1"/>
</dbReference>
<dbReference type="FunFam" id="1.20.120.330:FF:000006">
    <property type="entry name" value="Programmed cell death protein 10"/>
    <property type="match status" value="1"/>
</dbReference>
<dbReference type="Gene3D" id="1.10.12.70">
    <property type="match status" value="1"/>
</dbReference>
<dbReference type="Gene3D" id="1.20.120.330">
    <property type="entry name" value="Nucleotidyltransferases domain 2"/>
    <property type="match status" value="1"/>
</dbReference>
<dbReference type="InterPro" id="IPR046409">
    <property type="entry name" value="PDC10_dimerisation_sf"/>
</dbReference>
<dbReference type="InterPro" id="IPR009652">
    <property type="entry name" value="PDCD10"/>
</dbReference>
<dbReference type="InterPro" id="IPR048288">
    <property type="entry name" value="PDCD10_N"/>
</dbReference>
<dbReference type="PANTHER" id="PTHR13250:SF1">
    <property type="entry name" value="PROGRAMMED CELL DEATH PROTEIN 10"/>
    <property type="match status" value="1"/>
</dbReference>
<dbReference type="PANTHER" id="PTHR13250">
    <property type="entry name" value="TF-1 CELL APOPTOSIS RELATED PROTEIN-15"/>
    <property type="match status" value="1"/>
</dbReference>
<dbReference type="Pfam" id="PF06840">
    <property type="entry name" value="PDC10_C"/>
    <property type="match status" value="1"/>
</dbReference>
<dbReference type="Pfam" id="PF20929">
    <property type="entry name" value="PDCD10_N"/>
    <property type="match status" value="1"/>
</dbReference>
<sequence>MRMTMEEMKNEAETTSMVSMPLYAVMYPVFNELERVNLSAAQTLRAAFIKAEKENPGLTQDIIMKILEKKSVEVNFTESLLRMAADDVEEYMIERPEPEFQDLNEKARALKQILSKIPDEINDRVRFLQTIKDIASAIKELLDTVNNVFKKYQYQNRRALEHQKKEFVKYSKSFSDTLKTYFKDGKAINVFVSANRLIHQTNLILQTFKTVA</sequence>